<evidence type="ECO:0000255" key="1">
    <source>
        <dbReference type="HAMAP-Rule" id="MF_01365"/>
    </source>
</evidence>
<evidence type="ECO:0000305" key="2"/>
<feature type="chain" id="PRO_1000214933" description="Large ribosomal subunit protein uL6">
    <location>
        <begin position="1"/>
        <end position="177"/>
    </location>
</feature>
<protein>
    <recommendedName>
        <fullName evidence="1">Large ribosomal subunit protein uL6</fullName>
    </recommendedName>
    <alternativeName>
        <fullName evidence="2">50S ribosomal protein L6</fullName>
    </alternativeName>
</protein>
<organism>
    <name type="scientific">Pseudomonas fluorescens (strain SBW25)</name>
    <dbReference type="NCBI Taxonomy" id="216595"/>
    <lineage>
        <taxon>Bacteria</taxon>
        <taxon>Pseudomonadati</taxon>
        <taxon>Pseudomonadota</taxon>
        <taxon>Gammaproteobacteria</taxon>
        <taxon>Pseudomonadales</taxon>
        <taxon>Pseudomonadaceae</taxon>
        <taxon>Pseudomonas</taxon>
    </lineage>
</organism>
<name>RL6_PSEFS</name>
<comment type="function">
    <text evidence="1">This protein binds to the 23S rRNA, and is important in its secondary structure. It is located near the subunit interface in the base of the L7/L12 stalk, and near the tRNA binding site of the peptidyltransferase center.</text>
</comment>
<comment type="subunit">
    <text evidence="1">Part of the 50S ribosomal subunit.</text>
</comment>
<comment type="similarity">
    <text evidence="1">Belongs to the universal ribosomal protein uL6 family.</text>
</comment>
<gene>
    <name evidence="1" type="primary">rplF</name>
    <name type="ordered locus">PFLU_5512</name>
</gene>
<sequence length="177" mass="19197">MSRVAKNPVKLPAGVEVKFAGQQLSVKGAKGTLELNIHSSVEIVEEAGELRFAARNGDQQTRAMAGTTRALVNNMVQGVSQGFERKLQLVGVGYKAQAKGTVLNLALGFSHPVDYELPEGITAETPSQTDILIKGIDKQLVGQVAAEIRDFRPPEPYKGKGVRYADEVVRRKEAKKK</sequence>
<accession>C3K2W1</accession>
<proteinExistence type="inferred from homology"/>
<keyword id="KW-0687">Ribonucleoprotein</keyword>
<keyword id="KW-0689">Ribosomal protein</keyword>
<keyword id="KW-0694">RNA-binding</keyword>
<keyword id="KW-0699">rRNA-binding</keyword>
<dbReference type="EMBL" id="AM181176">
    <property type="protein sequence ID" value="CAY52740.1"/>
    <property type="molecule type" value="Genomic_DNA"/>
</dbReference>
<dbReference type="RefSeq" id="WP_003176412.1">
    <property type="nucleotide sequence ID" value="NC_012660.1"/>
</dbReference>
<dbReference type="SMR" id="C3K2W1"/>
<dbReference type="STRING" id="294.SRM1_05164"/>
<dbReference type="GeneID" id="97919477"/>
<dbReference type="eggNOG" id="COG0097">
    <property type="taxonomic scope" value="Bacteria"/>
</dbReference>
<dbReference type="HOGENOM" id="CLU_065464_1_2_6"/>
<dbReference type="OrthoDB" id="9805007at2"/>
<dbReference type="GO" id="GO:0022625">
    <property type="term" value="C:cytosolic large ribosomal subunit"/>
    <property type="evidence" value="ECO:0007669"/>
    <property type="project" value="TreeGrafter"/>
</dbReference>
<dbReference type="GO" id="GO:0019843">
    <property type="term" value="F:rRNA binding"/>
    <property type="evidence" value="ECO:0007669"/>
    <property type="project" value="UniProtKB-UniRule"/>
</dbReference>
<dbReference type="GO" id="GO:0003735">
    <property type="term" value="F:structural constituent of ribosome"/>
    <property type="evidence" value="ECO:0007669"/>
    <property type="project" value="InterPro"/>
</dbReference>
<dbReference type="GO" id="GO:0002181">
    <property type="term" value="P:cytoplasmic translation"/>
    <property type="evidence" value="ECO:0007669"/>
    <property type="project" value="TreeGrafter"/>
</dbReference>
<dbReference type="FunFam" id="3.90.930.12:FF:000001">
    <property type="entry name" value="50S ribosomal protein L6"/>
    <property type="match status" value="1"/>
</dbReference>
<dbReference type="FunFam" id="3.90.930.12:FF:000002">
    <property type="entry name" value="50S ribosomal protein L6"/>
    <property type="match status" value="1"/>
</dbReference>
<dbReference type="Gene3D" id="3.90.930.12">
    <property type="entry name" value="Ribosomal protein L6, alpha-beta domain"/>
    <property type="match status" value="2"/>
</dbReference>
<dbReference type="HAMAP" id="MF_01365_B">
    <property type="entry name" value="Ribosomal_uL6_B"/>
    <property type="match status" value="1"/>
</dbReference>
<dbReference type="InterPro" id="IPR000702">
    <property type="entry name" value="Ribosomal_uL6-like"/>
</dbReference>
<dbReference type="InterPro" id="IPR036789">
    <property type="entry name" value="Ribosomal_uL6-like_a/b-dom_sf"/>
</dbReference>
<dbReference type="InterPro" id="IPR020040">
    <property type="entry name" value="Ribosomal_uL6_a/b-dom"/>
</dbReference>
<dbReference type="InterPro" id="IPR019906">
    <property type="entry name" value="Ribosomal_uL6_bac-type"/>
</dbReference>
<dbReference type="InterPro" id="IPR002358">
    <property type="entry name" value="Ribosomal_uL6_CS"/>
</dbReference>
<dbReference type="NCBIfam" id="TIGR03654">
    <property type="entry name" value="L6_bact"/>
    <property type="match status" value="1"/>
</dbReference>
<dbReference type="PANTHER" id="PTHR11655">
    <property type="entry name" value="60S/50S RIBOSOMAL PROTEIN L6/L9"/>
    <property type="match status" value="1"/>
</dbReference>
<dbReference type="PANTHER" id="PTHR11655:SF14">
    <property type="entry name" value="LARGE RIBOSOMAL SUBUNIT PROTEIN UL6M"/>
    <property type="match status" value="1"/>
</dbReference>
<dbReference type="Pfam" id="PF00347">
    <property type="entry name" value="Ribosomal_L6"/>
    <property type="match status" value="2"/>
</dbReference>
<dbReference type="PIRSF" id="PIRSF002162">
    <property type="entry name" value="Ribosomal_L6"/>
    <property type="match status" value="1"/>
</dbReference>
<dbReference type="PRINTS" id="PR00059">
    <property type="entry name" value="RIBOSOMALL6"/>
</dbReference>
<dbReference type="SUPFAM" id="SSF56053">
    <property type="entry name" value="Ribosomal protein L6"/>
    <property type="match status" value="2"/>
</dbReference>
<dbReference type="PROSITE" id="PS00525">
    <property type="entry name" value="RIBOSOMAL_L6_1"/>
    <property type="match status" value="1"/>
</dbReference>
<reference key="1">
    <citation type="journal article" date="2009" name="Genome Biol.">
        <title>Genomic and genetic analyses of diversity and plant interactions of Pseudomonas fluorescens.</title>
        <authorList>
            <person name="Silby M.W."/>
            <person name="Cerdeno-Tarraga A.M."/>
            <person name="Vernikos G.S."/>
            <person name="Giddens S.R."/>
            <person name="Jackson R.W."/>
            <person name="Preston G.M."/>
            <person name="Zhang X.-X."/>
            <person name="Moon C.D."/>
            <person name="Gehrig S.M."/>
            <person name="Godfrey S.A.C."/>
            <person name="Knight C.G."/>
            <person name="Malone J.G."/>
            <person name="Robinson Z."/>
            <person name="Spiers A.J."/>
            <person name="Harris S."/>
            <person name="Challis G.L."/>
            <person name="Yaxley A.M."/>
            <person name="Harris D."/>
            <person name="Seeger K."/>
            <person name="Murphy L."/>
            <person name="Rutter S."/>
            <person name="Squares R."/>
            <person name="Quail M.A."/>
            <person name="Saunders E."/>
            <person name="Mavromatis K."/>
            <person name="Brettin T.S."/>
            <person name="Bentley S.D."/>
            <person name="Hothersall J."/>
            <person name="Stephens E."/>
            <person name="Thomas C.M."/>
            <person name="Parkhill J."/>
            <person name="Levy S.B."/>
            <person name="Rainey P.B."/>
            <person name="Thomson N.R."/>
        </authorList>
    </citation>
    <scope>NUCLEOTIDE SEQUENCE [LARGE SCALE GENOMIC DNA]</scope>
    <source>
        <strain>SBW25</strain>
    </source>
</reference>